<evidence type="ECO:0000255" key="1"/>
<gene>
    <name type="primary">yeeZ</name>
    <name type="ordered locus">b2016</name>
    <name type="ordered locus">JW1998</name>
</gene>
<accession>P0AD12</accession>
<accession>P76370</accession>
<accession>Q2MAY8</accession>
<keyword id="KW-0067">ATP-binding</keyword>
<keyword id="KW-0547">Nucleotide-binding</keyword>
<keyword id="KW-1185">Reference proteome</keyword>
<keyword id="KW-0732">Signal</keyword>
<reference key="1">
    <citation type="journal article" date="1997" name="Science">
        <title>The complete genome sequence of Escherichia coli K-12.</title>
        <authorList>
            <person name="Blattner F.R."/>
            <person name="Plunkett G. III"/>
            <person name="Bloch C.A."/>
            <person name="Perna N.T."/>
            <person name="Burland V."/>
            <person name="Riley M."/>
            <person name="Collado-Vides J."/>
            <person name="Glasner J.D."/>
            <person name="Rode C.K."/>
            <person name="Mayhew G.F."/>
            <person name="Gregor J."/>
            <person name="Davis N.W."/>
            <person name="Kirkpatrick H.A."/>
            <person name="Goeden M.A."/>
            <person name="Rose D.J."/>
            <person name="Mau B."/>
            <person name="Shao Y."/>
        </authorList>
    </citation>
    <scope>NUCLEOTIDE SEQUENCE [LARGE SCALE GENOMIC DNA]</scope>
    <source>
        <strain>K12 / MG1655 / ATCC 47076</strain>
    </source>
</reference>
<reference key="2">
    <citation type="journal article" date="2006" name="Mol. Syst. Biol.">
        <title>Highly accurate genome sequences of Escherichia coli K-12 strains MG1655 and W3110.</title>
        <authorList>
            <person name="Hayashi K."/>
            <person name="Morooka N."/>
            <person name="Yamamoto Y."/>
            <person name="Fujita K."/>
            <person name="Isono K."/>
            <person name="Choi S."/>
            <person name="Ohtsubo E."/>
            <person name="Baba T."/>
            <person name="Wanner B.L."/>
            <person name="Mori H."/>
            <person name="Horiuchi T."/>
        </authorList>
    </citation>
    <scope>NUCLEOTIDE SEQUENCE [LARGE SCALE GENOMIC DNA]</scope>
    <source>
        <strain>K12 / W3110 / ATCC 27325 / DSM 5911</strain>
    </source>
</reference>
<reference key="3">
    <citation type="journal article" date="1999" name="Electrophoresis">
        <title>Enrichment of low abundance proteins of Escherichia coli by hydroxyapatite chromatography.</title>
        <authorList>
            <person name="Fountoulakis M."/>
            <person name="Takacs M.-F."/>
            <person name="Berndt P."/>
            <person name="Langen H."/>
            <person name="Takacs B."/>
        </authorList>
    </citation>
    <scope>IDENTIFICATION BY MASS SPECTROMETRY</scope>
    <source>
        <strain>B / BL21</strain>
    </source>
</reference>
<organism>
    <name type="scientific">Escherichia coli (strain K12)</name>
    <dbReference type="NCBI Taxonomy" id="83333"/>
    <lineage>
        <taxon>Bacteria</taxon>
        <taxon>Pseudomonadati</taxon>
        <taxon>Pseudomonadota</taxon>
        <taxon>Gammaproteobacteria</taxon>
        <taxon>Enterobacterales</taxon>
        <taxon>Enterobacteriaceae</taxon>
        <taxon>Escherichia</taxon>
    </lineage>
</organism>
<protein>
    <recommendedName>
        <fullName>Protein YeeZ</fullName>
    </recommendedName>
</protein>
<name>YEEZ_ECOLI</name>
<feature type="signal peptide" evidence="1">
    <location>
        <begin position="1"/>
        <end position="24"/>
    </location>
</feature>
<feature type="chain" id="PRO_0000013866" description="Protein YeeZ">
    <location>
        <begin position="25"/>
        <end position="274"/>
    </location>
</feature>
<feature type="binding site" evidence="1">
    <location>
        <begin position="170"/>
        <end position="177"/>
    </location>
    <ligand>
        <name>ATP</name>
        <dbReference type="ChEBI" id="CHEBI:30616"/>
    </ligand>
</feature>
<dbReference type="EMBL" id="U00096">
    <property type="protein sequence ID" value="AAC75077.1"/>
    <property type="molecule type" value="Genomic_DNA"/>
</dbReference>
<dbReference type="EMBL" id="AP009048">
    <property type="protein sequence ID" value="BAE76568.1"/>
    <property type="molecule type" value="Genomic_DNA"/>
</dbReference>
<dbReference type="PIR" id="G64966">
    <property type="entry name" value="G64966"/>
</dbReference>
<dbReference type="RefSeq" id="NP_416520.1">
    <property type="nucleotide sequence ID" value="NC_000913.3"/>
</dbReference>
<dbReference type="RefSeq" id="WP_000754737.1">
    <property type="nucleotide sequence ID" value="NZ_SSZK01000062.1"/>
</dbReference>
<dbReference type="SMR" id="P0AD12"/>
<dbReference type="BioGRID" id="4260418">
    <property type="interactions" value="12"/>
</dbReference>
<dbReference type="DIP" id="DIP-35847N"/>
<dbReference type="FunCoup" id="P0AD12">
    <property type="interactions" value="327"/>
</dbReference>
<dbReference type="IntAct" id="P0AD12">
    <property type="interactions" value="7"/>
</dbReference>
<dbReference type="STRING" id="511145.b2016"/>
<dbReference type="jPOST" id="P0AD12"/>
<dbReference type="PaxDb" id="511145-b2016"/>
<dbReference type="DNASU" id="946538"/>
<dbReference type="EnsemblBacteria" id="AAC75077">
    <property type="protein sequence ID" value="AAC75077"/>
    <property type="gene ID" value="b2016"/>
</dbReference>
<dbReference type="GeneID" id="946538"/>
<dbReference type="KEGG" id="ecj:JW1998"/>
<dbReference type="KEGG" id="eco:b2016"/>
<dbReference type="KEGG" id="ecoc:C3026_11370"/>
<dbReference type="PATRIC" id="fig|1411691.4.peg.236"/>
<dbReference type="EchoBASE" id="EB3174"/>
<dbReference type="eggNOG" id="COG0451">
    <property type="taxonomic scope" value="Bacteria"/>
</dbReference>
<dbReference type="HOGENOM" id="CLU_007383_11_1_6"/>
<dbReference type="InParanoid" id="P0AD12"/>
<dbReference type="OMA" id="MVHRDDA"/>
<dbReference type="OrthoDB" id="751203at2"/>
<dbReference type="PhylomeDB" id="P0AD12"/>
<dbReference type="BioCyc" id="EcoCyc:G7089-MONOMER"/>
<dbReference type="PRO" id="PR:P0AD12"/>
<dbReference type="Proteomes" id="UP000000625">
    <property type="component" value="Chromosome"/>
</dbReference>
<dbReference type="GO" id="GO:0005737">
    <property type="term" value="C:cytoplasm"/>
    <property type="evidence" value="ECO:0000318"/>
    <property type="project" value="GO_Central"/>
</dbReference>
<dbReference type="GO" id="GO:0005829">
    <property type="term" value="C:cytosol"/>
    <property type="evidence" value="ECO:0000314"/>
    <property type="project" value="EcoCyc"/>
</dbReference>
<dbReference type="GO" id="GO:0004029">
    <property type="term" value="F:aldehyde dehydrogenase (NAD+) activity"/>
    <property type="evidence" value="ECO:0000318"/>
    <property type="project" value="GO_Central"/>
</dbReference>
<dbReference type="GO" id="GO:0005524">
    <property type="term" value="F:ATP binding"/>
    <property type="evidence" value="ECO:0007669"/>
    <property type="project" value="UniProtKB-KW"/>
</dbReference>
<dbReference type="CDD" id="cd05266">
    <property type="entry name" value="SDR_a4"/>
    <property type="match status" value="1"/>
</dbReference>
<dbReference type="FunFam" id="3.40.50.720:FF:000130">
    <property type="entry name" value="SDR family NAD(P)-dependent oxidoreductase"/>
    <property type="match status" value="1"/>
</dbReference>
<dbReference type="Gene3D" id="3.40.50.720">
    <property type="entry name" value="NAD(P)-binding Rossmann-like Domain"/>
    <property type="match status" value="1"/>
</dbReference>
<dbReference type="InterPro" id="IPR001509">
    <property type="entry name" value="Epimerase_deHydtase"/>
</dbReference>
<dbReference type="InterPro" id="IPR036291">
    <property type="entry name" value="NAD(P)-bd_dom_sf"/>
</dbReference>
<dbReference type="InterPro" id="IPR051783">
    <property type="entry name" value="NAD(P)-dependent_oxidoreduct"/>
</dbReference>
<dbReference type="PANTHER" id="PTHR48079:SF6">
    <property type="entry name" value="NAD(P)-BINDING DOMAIN-CONTAINING PROTEIN-RELATED"/>
    <property type="match status" value="1"/>
</dbReference>
<dbReference type="PANTHER" id="PTHR48079">
    <property type="entry name" value="PROTEIN YEEZ"/>
    <property type="match status" value="1"/>
</dbReference>
<dbReference type="Pfam" id="PF01370">
    <property type="entry name" value="Epimerase"/>
    <property type="match status" value="1"/>
</dbReference>
<dbReference type="SUPFAM" id="SSF51735">
    <property type="entry name" value="NAD(P)-binding Rossmann-fold domains"/>
    <property type="match status" value="1"/>
</dbReference>
<sequence length="274" mass="29680">MKKVAIVGLGWLGMPLAMSLSARGWQVTGSKTTQDGVEAARMSGIDSYLLRMEPELVCDSDDLDALMDADALVITLPARRSGPGDEFYLQAVQELVDSALAHRIPRIIFTSSTSVYGDAQGTVKETTPRNPVTNSGRVLEELEDWLHNLPGTSVDILRLAGLVGPGRHPGRFFAGKTAPDGEHGVNLVHLEDVIGAITLLLQAPKGGHIYNICAPAHPARNVFYPQMARLLGLEPPQFRNSLDSGKGKIIDGSRICNELGFEYQYPDPLVMPLE</sequence>
<proteinExistence type="evidence at protein level"/>